<keyword id="KW-0002">3D-structure</keyword>
<keyword id="KW-0049">Antioxidant</keyword>
<keyword id="KW-0186">Copper</keyword>
<keyword id="KW-1015">Disulfide bond</keyword>
<keyword id="KW-0479">Metal-binding</keyword>
<keyword id="KW-0560">Oxidoreductase</keyword>
<keyword id="KW-1185">Reference proteome</keyword>
<keyword id="KW-0964">Secreted</keyword>
<keyword id="KW-0732">Signal</keyword>
<keyword id="KW-0862">Zinc</keyword>
<gene>
    <name type="primary">sod-4</name>
    <name type="synonym">sod2</name>
</gene>
<organism>
    <name type="scientific">Onchocerca volvulus</name>
    <dbReference type="NCBI Taxonomy" id="6282"/>
    <lineage>
        <taxon>Eukaryota</taxon>
        <taxon>Metazoa</taxon>
        <taxon>Ecdysozoa</taxon>
        <taxon>Nematoda</taxon>
        <taxon>Chromadorea</taxon>
        <taxon>Rhabditida</taxon>
        <taxon>Spirurina</taxon>
        <taxon>Spiruromorpha</taxon>
        <taxon>Filarioidea</taxon>
        <taxon>Onchocercidae</taxon>
        <taxon>Onchocerca</taxon>
    </lineage>
</organism>
<protein>
    <recommendedName>
        <fullName>Extracellular superoxide dismutase [Cu-Zn]</fullName>
        <shortName>EC-SOD</shortName>
        <ecNumber>1.15.1.1</ecNumber>
    </recommendedName>
</protein>
<comment type="function">
    <text>Destroys radicals which are normally produced within the cells and which are toxic to biological systems. May act in the parasite defense against phagocyte-generated reactive oxygen species.</text>
</comment>
<comment type="catalytic activity">
    <reaction>
        <text>2 superoxide + 2 H(+) = H2O2 + O2</text>
        <dbReference type="Rhea" id="RHEA:20696"/>
        <dbReference type="ChEBI" id="CHEBI:15378"/>
        <dbReference type="ChEBI" id="CHEBI:15379"/>
        <dbReference type="ChEBI" id="CHEBI:16240"/>
        <dbReference type="ChEBI" id="CHEBI:18421"/>
        <dbReference type="EC" id="1.15.1.1"/>
    </reaction>
</comment>
<comment type="cofactor">
    <cofactor evidence="1">
        <name>Cu cation</name>
        <dbReference type="ChEBI" id="CHEBI:23378"/>
    </cofactor>
    <text evidence="1">Binds 1 copper ion per subunit.</text>
</comment>
<comment type="cofactor">
    <cofactor evidence="1">
        <name>Zn(2+)</name>
        <dbReference type="ChEBI" id="CHEBI:29105"/>
    </cofactor>
    <text evidence="1">Binds 1 zinc ion per subunit.</text>
</comment>
<comment type="subunit">
    <text>Homodimer.</text>
</comment>
<comment type="subcellular location">
    <subcellularLocation>
        <location evidence="3">Secreted</location>
        <location evidence="3">Extracellular space</location>
    </subcellularLocation>
</comment>
<comment type="similarity">
    <text evidence="4">Belongs to the Cu-Zn superoxide dismutase family.</text>
</comment>
<evidence type="ECO:0000250" key="1"/>
<evidence type="ECO:0000255" key="2"/>
<evidence type="ECO:0000269" key="3">
    <source>
    </source>
</evidence>
<evidence type="ECO:0000305" key="4"/>
<evidence type="ECO:0007829" key="5">
    <source>
        <dbReference type="PDB" id="5IN2"/>
    </source>
</evidence>
<feature type="signal peptide" evidence="2">
    <location>
        <begin position="1"/>
        <end position="42"/>
    </location>
</feature>
<feature type="chain" id="PRO_0000032864" description="Extracellular superoxide dismutase [Cu-Zn]">
    <location>
        <begin position="43"/>
        <end position="201"/>
    </location>
</feature>
<feature type="binding site" evidence="1">
    <location>
        <position position="89"/>
    </location>
    <ligand>
        <name>Cu cation</name>
        <dbReference type="ChEBI" id="CHEBI:23378"/>
        <note>catalytic</note>
    </ligand>
</feature>
<feature type="binding site" evidence="1">
    <location>
        <position position="91"/>
    </location>
    <ligand>
        <name>Cu cation</name>
        <dbReference type="ChEBI" id="CHEBI:23378"/>
        <note>catalytic</note>
    </ligand>
</feature>
<feature type="binding site" evidence="1">
    <location>
        <position position="106"/>
    </location>
    <ligand>
        <name>Cu cation</name>
        <dbReference type="ChEBI" id="CHEBI:23378"/>
        <note>catalytic</note>
    </ligand>
</feature>
<feature type="binding site" evidence="1">
    <location>
        <position position="106"/>
    </location>
    <ligand>
        <name>Zn(2+)</name>
        <dbReference type="ChEBI" id="CHEBI:29105"/>
        <note>structural</note>
    </ligand>
</feature>
<feature type="binding site" evidence="1">
    <location>
        <position position="114"/>
    </location>
    <ligand>
        <name>Zn(2+)</name>
        <dbReference type="ChEBI" id="CHEBI:29105"/>
        <note>structural</note>
    </ligand>
</feature>
<feature type="binding site" evidence="1">
    <location>
        <position position="123"/>
    </location>
    <ligand>
        <name>Zn(2+)</name>
        <dbReference type="ChEBI" id="CHEBI:29105"/>
        <note>structural</note>
    </ligand>
</feature>
<feature type="binding site" evidence="1">
    <location>
        <position position="126"/>
    </location>
    <ligand>
        <name>Zn(2+)</name>
        <dbReference type="ChEBI" id="CHEBI:29105"/>
        <note>structural</note>
    </ligand>
</feature>
<feature type="binding site" evidence="1">
    <location>
        <position position="163"/>
    </location>
    <ligand>
        <name>Cu cation</name>
        <dbReference type="ChEBI" id="CHEBI:23378"/>
        <note>catalytic</note>
    </ligand>
</feature>
<feature type="disulfide bond" evidence="1">
    <location>
        <begin position="100"/>
        <end position="192"/>
    </location>
</feature>
<feature type="strand" evidence="5">
    <location>
        <begin position="45"/>
        <end position="52"/>
    </location>
</feature>
<feature type="strand" evidence="5">
    <location>
        <begin position="54"/>
        <end position="56"/>
    </location>
</feature>
<feature type="strand" evidence="5">
    <location>
        <begin position="58"/>
        <end position="65"/>
    </location>
</feature>
<feature type="strand" evidence="5">
    <location>
        <begin position="72"/>
        <end position="80"/>
    </location>
</feature>
<feature type="strand" evidence="5">
    <location>
        <begin position="83"/>
        <end position="92"/>
    </location>
</feature>
<feature type="turn" evidence="5">
    <location>
        <begin position="97"/>
        <end position="100"/>
    </location>
</feature>
<feature type="helix" evidence="5">
    <location>
        <begin position="101"/>
        <end position="103"/>
    </location>
</feature>
<feature type="strand" evidence="5">
    <location>
        <begin position="120"/>
        <end position="122"/>
    </location>
</feature>
<feature type="strand" evidence="5">
    <location>
        <begin position="126"/>
        <end position="132"/>
    </location>
</feature>
<feature type="strand" evidence="5">
    <location>
        <begin position="138"/>
        <end position="146"/>
    </location>
</feature>
<feature type="strand" evidence="5">
    <location>
        <begin position="148"/>
        <end position="151"/>
    </location>
</feature>
<feature type="strand" evidence="5">
    <location>
        <begin position="158"/>
        <end position="165"/>
    </location>
</feature>
<feature type="helix" evidence="5">
    <location>
        <begin position="174"/>
        <end position="176"/>
    </location>
</feature>
<feature type="helix" evidence="5">
    <location>
        <begin position="177"/>
        <end position="183"/>
    </location>
</feature>
<feature type="strand" evidence="5">
    <location>
        <begin position="189"/>
        <end position="194"/>
    </location>
</feature>
<dbReference type="EC" id="1.15.1.1"/>
<dbReference type="EMBL" id="L13778">
    <property type="protein sequence ID" value="AAA17049.1"/>
    <property type="molecule type" value="mRNA"/>
</dbReference>
<dbReference type="PDB" id="5IN2">
    <property type="method" value="X-ray"/>
    <property type="resolution" value="1.55 A"/>
    <property type="chains" value="A=44-201"/>
</dbReference>
<dbReference type="PDBsum" id="5IN2"/>
<dbReference type="SASBDB" id="Q07449"/>
<dbReference type="SMR" id="Q07449"/>
<dbReference type="STRING" id="6282.Q07449"/>
<dbReference type="HOGENOM" id="CLU_056632_4_2_1"/>
<dbReference type="Proteomes" id="UP000024404">
    <property type="component" value="Unassembled WGS sequence"/>
</dbReference>
<dbReference type="GO" id="GO:0005576">
    <property type="term" value="C:extracellular region"/>
    <property type="evidence" value="ECO:0007669"/>
    <property type="project" value="UniProtKB-SubCell"/>
</dbReference>
<dbReference type="GO" id="GO:0005507">
    <property type="term" value="F:copper ion binding"/>
    <property type="evidence" value="ECO:0007669"/>
    <property type="project" value="InterPro"/>
</dbReference>
<dbReference type="GO" id="GO:0004784">
    <property type="term" value="F:superoxide dismutase activity"/>
    <property type="evidence" value="ECO:0007669"/>
    <property type="project" value="UniProtKB-EC"/>
</dbReference>
<dbReference type="CDD" id="cd00305">
    <property type="entry name" value="Cu-Zn_Superoxide_Dismutase"/>
    <property type="match status" value="1"/>
</dbReference>
<dbReference type="FunFam" id="2.60.40.200:FF:000001">
    <property type="entry name" value="Superoxide dismutase [Cu-Zn]"/>
    <property type="match status" value="1"/>
</dbReference>
<dbReference type="Gene3D" id="2.60.40.200">
    <property type="entry name" value="Superoxide dismutase, copper/zinc binding domain"/>
    <property type="match status" value="1"/>
</dbReference>
<dbReference type="InterPro" id="IPR036423">
    <property type="entry name" value="SOD-like_Cu/Zn_dom_sf"/>
</dbReference>
<dbReference type="InterPro" id="IPR024134">
    <property type="entry name" value="SOD_Cu/Zn_/chaperone"/>
</dbReference>
<dbReference type="InterPro" id="IPR018152">
    <property type="entry name" value="SOD_Cu/Zn_BS"/>
</dbReference>
<dbReference type="InterPro" id="IPR001424">
    <property type="entry name" value="SOD_Cu_Zn_dom"/>
</dbReference>
<dbReference type="PANTHER" id="PTHR10003">
    <property type="entry name" value="SUPEROXIDE DISMUTASE CU-ZN -RELATED"/>
    <property type="match status" value="1"/>
</dbReference>
<dbReference type="Pfam" id="PF00080">
    <property type="entry name" value="Sod_Cu"/>
    <property type="match status" value="1"/>
</dbReference>
<dbReference type="PRINTS" id="PR00068">
    <property type="entry name" value="CUZNDISMTASE"/>
</dbReference>
<dbReference type="SUPFAM" id="SSF49329">
    <property type="entry name" value="Cu,Zn superoxide dismutase-like"/>
    <property type="match status" value="1"/>
</dbReference>
<dbReference type="PROSITE" id="PS00087">
    <property type="entry name" value="SOD_CU_ZN_1"/>
    <property type="match status" value="1"/>
</dbReference>
<dbReference type="PROSITE" id="PS00332">
    <property type="entry name" value="SOD_CU_ZN_2"/>
    <property type="match status" value="1"/>
</dbReference>
<sequence>MINSFIVIFLSFLIFINYANLVCVEATHVYGRRSHSNGMHGNGARRAVAVLRGDAGVSGIIYFQQGSGGSITTISGSVSGLTPGLHGFHVHQYGDQTNGCTSAGDHYNPFGKTHGGPNDRIKHIGDLGNIVAGANGVAEVYINSYDIKLRGPLSVIGHSLVVHANTDDLGQGTGNMREESLKTGNAGSRLACGVIGIAAVS</sequence>
<accession>Q07449</accession>
<reference key="1">
    <citation type="journal article" date="1994" name="Infect. Immun.">
        <title>Molecular cloning of an Onchocerca volvulus extracellular Cu-Zn superoxide dismutase.</title>
        <authorList>
            <person name="James E.R."/>
            <person name="McLean D.C."/>
            <person name="Perler F."/>
        </authorList>
    </citation>
    <scope>NUCLEOTIDE SEQUENCE [MRNA]</scope>
</reference>
<reference key="2">
    <citation type="journal article" date="1997" name="Mol. Biochem. Parasitol.">
        <title>Localization and functional analysis of the cytosolic and extracellular CuZn superoxide dismutases in the human parasitic nematode Onchocerca volvulus.</title>
        <authorList>
            <person name="Henkle-Duehrsen K."/>
            <person name="Tuan R.S."/>
            <person name="Wildenburg G."/>
            <person name="Eschbach M.-L."/>
            <person name="Tawe W."/>
            <person name="Zipfel P."/>
            <person name="Walter R.D."/>
        </authorList>
    </citation>
    <scope>CHARACTERIZATION</scope>
    <scope>SUBCELLULAR LOCATION</scope>
</reference>
<name>SODE_ONCVO</name>
<proteinExistence type="evidence at protein level"/>